<keyword id="KW-0012">Acyltransferase</keyword>
<keyword id="KW-0028">Amino-acid biosynthesis</keyword>
<keyword id="KW-0198">Cysteine biosynthesis</keyword>
<keyword id="KW-0963">Cytoplasm</keyword>
<keyword id="KW-1185">Reference proteome</keyword>
<keyword id="KW-0677">Repeat</keyword>
<keyword id="KW-0808">Transferase</keyword>
<dbReference type="EC" id="2.3.1.30"/>
<dbReference type="EMBL" id="AE005674">
    <property type="protein sequence ID" value="AAN45093.1"/>
    <property type="molecule type" value="Genomic_DNA"/>
</dbReference>
<dbReference type="EMBL" id="AE014073">
    <property type="protein sequence ID" value="AAP19099.1"/>
    <property type="molecule type" value="Genomic_DNA"/>
</dbReference>
<dbReference type="RefSeq" id="NP_709386.1">
    <property type="nucleotide sequence ID" value="NC_004337.2"/>
</dbReference>
<dbReference type="RefSeq" id="WP_001277561.1">
    <property type="nucleotide sequence ID" value="NZ_WPGW01000082.1"/>
</dbReference>
<dbReference type="SMR" id="P0A9D7"/>
<dbReference type="STRING" id="198214.SF3646"/>
<dbReference type="PaxDb" id="198214-SF3646"/>
<dbReference type="GeneID" id="1026265"/>
<dbReference type="GeneID" id="93778321"/>
<dbReference type="KEGG" id="sfl:SF3646"/>
<dbReference type="KEGG" id="sfx:S4122"/>
<dbReference type="PATRIC" id="fig|198214.7.peg.4305"/>
<dbReference type="HOGENOM" id="CLU_051638_0_1_6"/>
<dbReference type="UniPathway" id="UPA00136">
    <property type="reaction ID" value="UER00199"/>
</dbReference>
<dbReference type="Proteomes" id="UP000001006">
    <property type="component" value="Chromosome"/>
</dbReference>
<dbReference type="Proteomes" id="UP000002673">
    <property type="component" value="Chromosome"/>
</dbReference>
<dbReference type="GO" id="GO:0005737">
    <property type="term" value="C:cytoplasm"/>
    <property type="evidence" value="ECO:0007669"/>
    <property type="project" value="UniProtKB-SubCell"/>
</dbReference>
<dbReference type="GO" id="GO:0009001">
    <property type="term" value="F:serine O-acetyltransferase activity"/>
    <property type="evidence" value="ECO:0007669"/>
    <property type="project" value="UniProtKB-EC"/>
</dbReference>
<dbReference type="GO" id="GO:0006535">
    <property type="term" value="P:cysteine biosynthetic process from serine"/>
    <property type="evidence" value="ECO:0007669"/>
    <property type="project" value="InterPro"/>
</dbReference>
<dbReference type="CDD" id="cd03354">
    <property type="entry name" value="LbH_SAT"/>
    <property type="match status" value="1"/>
</dbReference>
<dbReference type="FunFam" id="1.10.3130.10:FF:000001">
    <property type="entry name" value="Acetyltransferase"/>
    <property type="match status" value="1"/>
</dbReference>
<dbReference type="FunFam" id="2.160.10.10:FF:000002">
    <property type="entry name" value="Serine acetyltransferase"/>
    <property type="match status" value="1"/>
</dbReference>
<dbReference type="Gene3D" id="2.160.10.10">
    <property type="entry name" value="Hexapeptide repeat proteins"/>
    <property type="match status" value="1"/>
</dbReference>
<dbReference type="Gene3D" id="1.10.3130.10">
    <property type="entry name" value="serine acetyltransferase, domain 1"/>
    <property type="match status" value="1"/>
</dbReference>
<dbReference type="InterPro" id="IPR001451">
    <property type="entry name" value="Hexapep"/>
</dbReference>
<dbReference type="InterPro" id="IPR018357">
    <property type="entry name" value="Hexapep_transf_CS"/>
</dbReference>
<dbReference type="InterPro" id="IPR045304">
    <property type="entry name" value="LbH_SAT"/>
</dbReference>
<dbReference type="InterPro" id="IPR010493">
    <property type="entry name" value="Ser_AcTrfase_N"/>
</dbReference>
<dbReference type="InterPro" id="IPR042122">
    <property type="entry name" value="Ser_AcTrfase_N_sf"/>
</dbReference>
<dbReference type="InterPro" id="IPR005881">
    <property type="entry name" value="Ser_O-AcTrfase"/>
</dbReference>
<dbReference type="InterPro" id="IPR053376">
    <property type="entry name" value="Serine_acetyltransferase"/>
</dbReference>
<dbReference type="InterPro" id="IPR011004">
    <property type="entry name" value="Trimer_LpxA-like_sf"/>
</dbReference>
<dbReference type="NCBIfam" id="TIGR01172">
    <property type="entry name" value="cysE"/>
    <property type="match status" value="1"/>
</dbReference>
<dbReference type="NCBIfam" id="NF041874">
    <property type="entry name" value="EPS_EpsC"/>
    <property type="match status" value="1"/>
</dbReference>
<dbReference type="NCBIfam" id="NF008349">
    <property type="entry name" value="PRK11132.1"/>
    <property type="match status" value="1"/>
</dbReference>
<dbReference type="PANTHER" id="PTHR42811">
    <property type="entry name" value="SERINE ACETYLTRANSFERASE"/>
    <property type="match status" value="1"/>
</dbReference>
<dbReference type="Pfam" id="PF00132">
    <property type="entry name" value="Hexapep"/>
    <property type="match status" value="1"/>
</dbReference>
<dbReference type="Pfam" id="PF06426">
    <property type="entry name" value="SATase_N"/>
    <property type="match status" value="1"/>
</dbReference>
<dbReference type="SMART" id="SM00971">
    <property type="entry name" value="SATase_N"/>
    <property type="match status" value="1"/>
</dbReference>
<dbReference type="SUPFAM" id="SSF51161">
    <property type="entry name" value="Trimeric LpxA-like enzymes"/>
    <property type="match status" value="1"/>
</dbReference>
<dbReference type="PROSITE" id="PS00101">
    <property type="entry name" value="HEXAPEP_TRANSFERASES"/>
    <property type="match status" value="1"/>
</dbReference>
<name>CYSE_SHIFL</name>
<protein>
    <recommendedName>
        <fullName>Serine acetyltransferase</fullName>
        <shortName>SAT</shortName>
        <ecNumber>2.3.1.30</ecNumber>
    </recommendedName>
</protein>
<feature type="chain" id="PRO_0000068673" description="Serine acetyltransferase">
    <location>
        <begin position="1"/>
        <end position="273"/>
    </location>
</feature>
<organism>
    <name type="scientific">Shigella flexneri</name>
    <dbReference type="NCBI Taxonomy" id="623"/>
    <lineage>
        <taxon>Bacteria</taxon>
        <taxon>Pseudomonadati</taxon>
        <taxon>Pseudomonadota</taxon>
        <taxon>Gammaproteobacteria</taxon>
        <taxon>Enterobacterales</taxon>
        <taxon>Enterobacteriaceae</taxon>
        <taxon>Shigella</taxon>
    </lineage>
</organism>
<proteinExistence type="inferred from homology"/>
<sequence>MSCEELEIVWNNIKAEARTLADCEPMLASFYHATLLKHENLGSALSYMLANKLSSPIMPAIAIREVVEEAYAADPEMIASAACDIQAVRTRDPAVDKYSTPLLYLKGFHALQAYRIGHWLWNQGRRALAIFLQNQVSVTFQVDIHPAAKIGRGIMLDHATGIVVGETAVIENDVSILQSVTLGGTGKSGGDRHPKIREGVMIGAGAKILGNIEVGRGAKIGAGSVVLQPVPPHTTAAGVPARIVGKPDSDKPSMDMDQHFNGINHTFEYGDGI</sequence>
<accession>P0A9D7</accession>
<accession>P05796</accession>
<gene>
    <name type="primary">cysE</name>
    <name type="ordered locus">SF3646</name>
    <name type="ordered locus">S4122</name>
</gene>
<evidence type="ECO:0000250" key="1"/>
<evidence type="ECO:0000305" key="2"/>
<reference key="1">
    <citation type="journal article" date="2002" name="Nucleic Acids Res.">
        <title>Genome sequence of Shigella flexneri 2a: insights into pathogenicity through comparison with genomes of Escherichia coli K12 and O157.</title>
        <authorList>
            <person name="Jin Q."/>
            <person name="Yuan Z."/>
            <person name="Xu J."/>
            <person name="Wang Y."/>
            <person name="Shen Y."/>
            <person name="Lu W."/>
            <person name="Wang J."/>
            <person name="Liu H."/>
            <person name="Yang J."/>
            <person name="Yang F."/>
            <person name="Zhang X."/>
            <person name="Zhang J."/>
            <person name="Yang G."/>
            <person name="Wu H."/>
            <person name="Qu D."/>
            <person name="Dong J."/>
            <person name="Sun L."/>
            <person name="Xue Y."/>
            <person name="Zhao A."/>
            <person name="Gao Y."/>
            <person name="Zhu J."/>
            <person name="Kan B."/>
            <person name="Ding K."/>
            <person name="Chen S."/>
            <person name="Cheng H."/>
            <person name="Yao Z."/>
            <person name="He B."/>
            <person name="Chen R."/>
            <person name="Ma D."/>
            <person name="Qiang B."/>
            <person name="Wen Y."/>
            <person name="Hou Y."/>
            <person name="Yu J."/>
        </authorList>
    </citation>
    <scope>NUCLEOTIDE SEQUENCE [LARGE SCALE GENOMIC DNA]</scope>
    <source>
        <strain>301 / Serotype 2a</strain>
    </source>
</reference>
<reference key="2">
    <citation type="journal article" date="2003" name="Infect. Immun.">
        <title>Complete genome sequence and comparative genomics of Shigella flexneri serotype 2a strain 2457T.</title>
        <authorList>
            <person name="Wei J."/>
            <person name="Goldberg M.B."/>
            <person name="Burland V."/>
            <person name="Venkatesan M.M."/>
            <person name="Deng W."/>
            <person name="Fournier G."/>
            <person name="Mayhew G.F."/>
            <person name="Plunkett G. III"/>
            <person name="Rose D.J."/>
            <person name="Darling A."/>
            <person name="Mau B."/>
            <person name="Perna N.T."/>
            <person name="Payne S.M."/>
            <person name="Runyen-Janecky L.J."/>
            <person name="Zhou S."/>
            <person name="Schwartz D.C."/>
            <person name="Blattner F.R."/>
        </authorList>
    </citation>
    <scope>NUCLEOTIDE SEQUENCE [LARGE SCALE GENOMIC DNA]</scope>
    <source>
        <strain>ATCC 700930 / 2457T / Serotype 2a</strain>
    </source>
</reference>
<comment type="catalytic activity">
    <reaction>
        <text>L-serine + acetyl-CoA = O-acetyl-L-serine + CoA</text>
        <dbReference type="Rhea" id="RHEA:24560"/>
        <dbReference type="ChEBI" id="CHEBI:33384"/>
        <dbReference type="ChEBI" id="CHEBI:57287"/>
        <dbReference type="ChEBI" id="CHEBI:57288"/>
        <dbReference type="ChEBI" id="CHEBI:58340"/>
        <dbReference type="EC" id="2.3.1.30"/>
    </reaction>
</comment>
<comment type="pathway">
    <text>Amino-acid biosynthesis; L-cysteine biosynthesis; L-cysteine from L-serine: step 1/2.</text>
</comment>
<comment type="subunit">
    <text evidence="1">Homohexamer. Dimer of a homotrimer (By similarity).</text>
</comment>
<comment type="subcellular location">
    <subcellularLocation>
        <location evidence="2">Cytoplasm</location>
    </subcellularLocation>
</comment>
<comment type="similarity">
    <text evidence="2">Belongs to the transferase hexapeptide repeat family.</text>
</comment>